<comment type="function">
    <text evidence="1">Functions as a cell surface receptor for TIMP1 and plays a role in the activation of cellular signaling cascades. Plays a role in the activation of ITGB1 and integrin signaling, leading to the activation of AKT, FAK/PTK2 and MAP kinases. Promotes cell survival, reorganization of the actin cytoskeleton, cell adhesion, spreading and migration, via its role in the activation of AKT and FAK/PTK2. Plays a role in VEGFA signaling via its role in regulating the internalization of KDR/VEGFR2. Plays a role in intracellular vesicular transport processes, and is required for normal trafficking of the PMEL luminal domain that is essential for the development and maturation of melanocytes. Plays a role in the adhesion of leukocytes onto endothelial cells via its role in the regulation of SELP trafficking. May play a role in mast cell degranulation in response to Ms4a2/FceRI stimulation, but not in mast cell degranulation in response to other stimuli (By similarity).</text>
</comment>
<comment type="subunit">
    <text evidence="1 3">Interacts with TIMP1 and ITGB1 and recruits TIMP1 to ITGB1. Interacts with CD9. Identified in a complex with CD9 and ITGB3. Interacts with PMEL. Interacts with KDR/VEGFR2; identified in a complex with ITGB1 and KDR/VEGFR2 and is required to recruit KDR to ITGB1 complexes. Interacts with SYT7 (By similarity).</text>
</comment>
<comment type="subcellular location">
    <subcellularLocation>
        <location evidence="2">Cell membrane</location>
        <topology evidence="4">Multi-pass membrane protein</topology>
    </subcellularLocation>
    <subcellularLocation>
        <location evidence="2">Lysosome membrane</location>
        <topology evidence="4">Multi-pass membrane protein</topology>
    </subcellularLocation>
    <subcellularLocation>
        <location evidence="2">Late endosome membrane</location>
        <topology evidence="4">Multi-pass membrane protein</topology>
    </subcellularLocation>
    <subcellularLocation>
        <location evidence="2">Endosome</location>
        <location evidence="2">Multivesicular body</location>
    </subcellularLocation>
    <subcellularLocation>
        <location evidence="2">Melanosome</location>
    </subcellularLocation>
    <subcellularLocation>
        <location evidence="2">Secreted</location>
        <location evidence="2">Extracellular exosome</location>
    </subcellularLocation>
    <subcellularLocation>
        <location evidence="2">Cell surface</location>
    </subcellularLocation>
    <text evidence="2">Also found in Weibel-Palade bodies of endothelial cells. Located in platelet dense granules. Detected in a subset of pre-melanosomes. Detected on intralumenal vesicles (ILVs) within multivesicular bodies.</text>
</comment>
<comment type="PTM">
    <text evidence="1">Palmitoylated at a low, basal level in unstimulated platelets. The level of palmitoylation increases when platelets are activated by thrombin (in vitro) (By similarity).</text>
</comment>
<comment type="similarity">
    <text evidence="5">Belongs to the tetraspanin (TM4SF) family.</text>
</comment>
<gene>
    <name type="primary">CD63</name>
</gene>
<name>CD63_RABIT</name>
<keyword id="KW-1003">Cell membrane</keyword>
<keyword id="KW-0967">Endosome</keyword>
<keyword id="KW-0325">Glycoprotein</keyword>
<keyword id="KW-0449">Lipoprotein</keyword>
<keyword id="KW-0458">Lysosome</keyword>
<keyword id="KW-0472">Membrane</keyword>
<keyword id="KW-0564">Palmitate</keyword>
<keyword id="KW-0653">Protein transport</keyword>
<keyword id="KW-1185">Reference proteome</keyword>
<keyword id="KW-0964">Secreted</keyword>
<keyword id="KW-0812">Transmembrane</keyword>
<keyword id="KW-1133">Transmembrane helix</keyword>
<keyword id="KW-0813">Transport</keyword>
<evidence type="ECO:0000250" key="1"/>
<evidence type="ECO:0000250" key="2">
    <source>
        <dbReference type="UniProtKB" id="P08962"/>
    </source>
</evidence>
<evidence type="ECO:0000250" key="3">
    <source>
        <dbReference type="UniProtKB" id="P41731"/>
    </source>
</evidence>
<evidence type="ECO:0000255" key="4"/>
<evidence type="ECO:0000305" key="5"/>
<proteinExistence type="evidence at transcript level"/>
<dbReference type="EMBL" id="D21264">
    <property type="protein sequence ID" value="BAA04804.1"/>
    <property type="molecule type" value="mRNA"/>
</dbReference>
<dbReference type="PIR" id="JC2297">
    <property type="entry name" value="JC2297"/>
</dbReference>
<dbReference type="RefSeq" id="NP_001075668.1">
    <property type="nucleotide sequence ID" value="NM_001082199.1"/>
</dbReference>
<dbReference type="RefSeq" id="XP_069907382.1">
    <property type="nucleotide sequence ID" value="XM_070051281.1"/>
</dbReference>
<dbReference type="RefSeq" id="XP_069907383.1">
    <property type="nucleotide sequence ID" value="XM_070051282.1"/>
</dbReference>
<dbReference type="SMR" id="Q28709"/>
<dbReference type="FunCoup" id="Q28709">
    <property type="interactions" value="160"/>
</dbReference>
<dbReference type="STRING" id="9986.ENSOCUP00000018861"/>
<dbReference type="GlyCosmos" id="Q28709">
    <property type="glycosylation" value="4 sites, No reported glycans"/>
</dbReference>
<dbReference type="GeneID" id="100008988"/>
<dbReference type="KEGG" id="ocu:100008988"/>
<dbReference type="CTD" id="967"/>
<dbReference type="InParanoid" id="Q28709"/>
<dbReference type="OrthoDB" id="10033535at2759"/>
<dbReference type="Proteomes" id="UP000001811">
    <property type="component" value="Unplaced"/>
</dbReference>
<dbReference type="GO" id="GO:0009986">
    <property type="term" value="C:cell surface"/>
    <property type="evidence" value="ECO:0007669"/>
    <property type="project" value="UniProtKB-SubCell"/>
</dbReference>
<dbReference type="GO" id="GO:0005576">
    <property type="term" value="C:extracellular region"/>
    <property type="evidence" value="ECO:0007669"/>
    <property type="project" value="UniProtKB-SubCell"/>
</dbReference>
<dbReference type="GO" id="GO:0031902">
    <property type="term" value="C:late endosome membrane"/>
    <property type="evidence" value="ECO:0000250"/>
    <property type="project" value="UniProtKB"/>
</dbReference>
<dbReference type="GO" id="GO:0005765">
    <property type="term" value="C:lysosomal membrane"/>
    <property type="evidence" value="ECO:0000250"/>
    <property type="project" value="UniProtKB"/>
</dbReference>
<dbReference type="GO" id="GO:0042470">
    <property type="term" value="C:melanosome"/>
    <property type="evidence" value="ECO:0007669"/>
    <property type="project" value="UniProtKB-SubCell"/>
</dbReference>
<dbReference type="GO" id="GO:0032585">
    <property type="term" value="C:multivesicular body membrane"/>
    <property type="evidence" value="ECO:0000250"/>
    <property type="project" value="UniProtKB"/>
</dbReference>
<dbReference type="GO" id="GO:0097487">
    <property type="term" value="C:multivesicular body, internal vesicle"/>
    <property type="evidence" value="ECO:0000250"/>
    <property type="project" value="UniProtKB"/>
</dbReference>
<dbReference type="GO" id="GO:0005886">
    <property type="term" value="C:plasma membrane"/>
    <property type="evidence" value="ECO:0000250"/>
    <property type="project" value="UniProtKB"/>
</dbReference>
<dbReference type="GO" id="GO:0016477">
    <property type="term" value="P:cell migration"/>
    <property type="evidence" value="ECO:0000250"/>
    <property type="project" value="UniProtKB"/>
</dbReference>
<dbReference type="GO" id="GO:0007160">
    <property type="term" value="P:cell-matrix adhesion"/>
    <property type="evidence" value="ECO:0000250"/>
    <property type="project" value="UniProtKB"/>
</dbReference>
<dbReference type="GO" id="GO:0035646">
    <property type="term" value="P:endosome to melanosome transport"/>
    <property type="evidence" value="ECO:0000250"/>
    <property type="project" value="UniProtKB"/>
</dbReference>
<dbReference type="GO" id="GO:0048757">
    <property type="term" value="P:pigment granule maturation"/>
    <property type="evidence" value="ECO:0000250"/>
    <property type="project" value="UniProtKB"/>
</dbReference>
<dbReference type="GO" id="GO:2001046">
    <property type="term" value="P:positive regulation of integrin-mediated signaling pathway"/>
    <property type="evidence" value="ECO:0000250"/>
    <property type="project" value="UniProtKB"/>
</dbReference>
<dbReference type="GO" id="GO:0002092">
    <property type="term" value="P:positive regulation of receptor internalization"/>
    <property type="evidence" value="ECO:0000250"/>
    <property type="project" value="UniProtKB"/>
</dbReference>
<dbReference type="GO" id="GO:0015031">
    <property type="term" value="P:protein transport"/>
    <property type="evidence" value="ECO:0007669"/>
    <property type="project" value="UniProtKB-KW"/>
</dbReference>
<dbReference type="GO" id="GO:1900746">
    <property type="term" value="P:regulation of vascular endothelial growth factor signaling pathway"/>
    <property type="evidence" value="ECO:0000250"/>
    <property type="project" value="UniProtKB"/>
</dbReference>
<dbReference type="CDD" id="cd03166">
    <property type="entry name" value="CD63_LEL"/>
    <property type="match status" value="1"/>
</dbReference>
<dbReference type="FunFam" id="1.10.1450.10:FF:000019">
    <property type="entry name" value="Tetraspanin"/>
    <property type="match status" value="1"/>
</dbReference>
<dbReference type="Gene3D" id="1.10.1450.10">
    <property type="entry name" value="Tetraspanin"/>
    <property type="match status" value="1"/>
</dbReference>
<dbReference type="InterPro" id="IPR042028">
    <property type="entry name" value="CD63_LEL"/>
</dbReference>
<dbReference type="InterPro" id="IPR018499">
    <property type="entry name" value="Tetraspanin/Peripherin"/>
</dbReference>
<dbReference type="InterPro" id="IPR000301">
    <property type="entry name" value="Tetraspanin_animals"/>
</dbReference>
<dbReference type="InterPro" id="IPR018503">
    <property type="entry name" value="Tetraspanin_CS"/>
</dbReference>
<dbReference type="InterPro" id="IPR008952">
    <property type="entry name" value="Tetraspanin_EC2_sf"/>
</dbReference>
<dbReference type="PANTHER" id="PTHR19282:SF471">
    <property type="entry name" value="CD63 ANTIGEN"/>
    <property type="match status" value="1"/>
</dbReference>
<dbReference type="PANTHER" id="PTHR19282">
    <property type="entry name" value="TETRASPANIN"/>
    <property type="match status" value="1"/>
</dbReference>
<dbReference type="Pfam" id="PF00335">
    <property type="entry name" value="Tetraspanin"/>
    <property type="match status" value="1"/>
</dbReference>
<dbReference type="PIRSF" id="PIRSF002419">
    <property type="entry name" value="Tetraspanin"/>
    <property type="match status" value="1"/>
</dbReference>
<dbReference type="PRINTS" id="PR00259">
    <property type="entry name" value="TMFOUR"/>
</dbReference>
<dbReference type="SUPFAM" id="SSF48652">
    <property type="entry name" value="Tetraspanin"/>
    <property type="match status" value="1"/>
</dbReference>
<dbReference type="PROSITE" id="PS00421">
    <property type="entry name" value="TM4_1"/>
    <property type="match status" value="1"/>
</dbReference>
<feature type="chain" id="PRO_0000219218" description="CD63 antigen">
    <location>
        <begin position="1"/>
        <end position="238"/>
    </location>
</feature>
<feature type="topological domain" description="Cytoplasmic" evidence="4">
    <location>
        <begin position="1"/>
        <end position="11"/>
    </location>
</feature>
<feature type="transmembrane region" description="Helical" evidence="4">
    <location>
        <begin position="12"/>
        <end position="32"/>
    </location>
</feature>
<feature type="topological domain" description="Extracellular" evidence="4">
    <location>
        <begin position="33"/>
        <end position="51"/>
    </location>
</feature>
<feature type="transmembrane region" description="Helical" evidence="4">
    <location>
        <begin position="52"/>
        <end position="72"/>
    </location>
</feature>
<feature type="topological domain" description="Cytoplasmic" evidence="4">
    <location>
        <begin position="73"/>
        <end position="81"/>
    </location>
</feature>
<feature type="transmembrane region" description="Helical" evidence="4">
    <location>
        <begin position="82"/>
        <end position="102"/>
    </location>
</feature>
<feature type="topological domain" description="Extracellular" evidence="4">
    <location>
        <begin position="103"/>
        <end position="203"/>
    </location>
</feature>
<feature type="transmembrane region" description="Helical" evidence="4">
    <location>
        <begin position="204"/>
        <end position="224"/>
    </location>
</feature>
<feature type="topological domain" description="Cytoplasmic" evidence="4">
    <location>
        <begin position="225"/>
        <end position="238"/>
    </location>
</feature>
<feature type="short sequence motif" description="Lysosomal targeting motif" evidence="3">
    <location>
        <begin position="234"/>
        <end position="238"/>
    </location>
</feature>
<feature type="glycosylation site" description="N-linked (GlcNAc...) asparagine" evidence="4">
    <location>
        <position position="125"/>
    </location>
</feature>
<feature type="glycosylation site" description="N-linked (GlcNAc...) asparagine" evidence="4">
    <location>
        <position position="130"/>
    </location>
</feature>
<feature type="glycosylation site" description="N-linked (GlcNAc...) asparagine" evidence="4">
    <location>
        <position position="150"/>
    </location>
</feature>
<feature type="glycosylation site" description="N-linked (GlcNAc...) asparagine" evidence="4">
    <location>
        <position position="172"/>
    </location>
</feature>
<protein>
    <recommendedName>
        <fullName>CD63 antigen</fullName>
    </recommendedName>
    <cdAntigenName>CD63</cdAntigenName>
</protein>
<accession>Q28709</accession>
<organism>
    <name type="scientific">Oryctolagus cuniculus</name>
    <name type="common">Rabbit</name>
    <dbReference type="NCBI Taxonomy" id="9986"/>
    <lineage>
        <taxon>Eukaryota</taxon>
        <taxon>Metazoa</taxon>
        <taxon>Chordata</taxon>
        <taxon>Craniata</taxon>
        <taxon>Vertebrata</taxon>
        <taxon>Euteleostomi</taxon>
        <taxon>Mammalia</taxon>
        <taxon>Eutheria</taxon>
        <taxon>Euarchontoglires</taxon>
        <taxon>Glires</taxon>
        <taxon>Lagomorpha</taxon>
        <taxon>Leporidae</taxon>
        <taxon>Oryctolagus</taxon>
    </lineage>
</organism>
<sequence>MAVEGGMKCVKFLLYVLLLAFCACAVGLIAVGVGAQLVLSQTITHGATPGSLLPVVIIAVGAFLFLVAFVGCCGTCKENYCLMITFAIFLSLIMLVEVAAAIAGYVFRDKVMSEFNKDFRQQMQNYSTDNQTALILDRMQKDFTCCGAANYTDWATIPGMTRDRVPDSCCVNVTSGCGVKFNVKDIYVEGCVEKIGLWLRKNVLVVAAAALGIAFVEVLGIVFACCLVKSIRSGYEVM</sequence>
<reference key="1">
    <citation type="journal article" date="1994" name="Cell Struct. Funct.">
        <title>Increased mRNA for CD63 antigen in atherosclerotic lesions of Watanabe heritable hyperlipidemic rabbits.</title>
        <authorList>
            <person name="Sohma Y."/>
            <person name="Suzuki T."/>
            <person name="Sasano H."/>
            <person name="Nagura H."/>
            <person name="Nose M."/>
            <person name="Yamamoto T."/>
        </authorList>
    </citation>
    <scope>NUCLEOTIDE SEQUENCE [MRNA]</scope>
    <source>
        <tissue>Aorta</tissue>
    </source>
</reference>